<proteinExistence type="evidence at transcript level"/>
<accession>Q9ERH8</accession>
<accession>Q3UM72</accession>
<accession>Q8BWE2</accession>
<accession>Q91VD7</accession>
<reference key="1">
    <citation type="journal article" date="2001" name="J. Biol. Chem.">
        <title>Molecular identification and characterization of novel human and mouse concentrative Na+-nucleoside cotransporter proteins (hCNT3 and mCNT3) broadly selective for purine and pyrimidine nucleosides (system cib).</title>
        <authorList>
            <person name="Ritzel M.W.L."/>
            <person name="Ng A.M.L."/>
            <person name="Yao S.Y.M."/>
            <person name="Graham K."/>
            <person name="Loewen S.K."/>
            <person name="Smith K.M."/>
            <person name="Ritzel R.G."/>
            <person name="Mowles D.A."/>
            <person name="Carpenter P."/>
            <person name="Chen X.-Z."/>
            <person name="Karpinski E."/>
            <person name="Hyde R.J."/>
            <person name="Baldwin S.A."/>
            <person name="Cass C.E."/>
            <person name="Young J.D."/>
        </authorList>
    </citation>
    <scope>NUCLEOTIDE SEQUENCE [MRNA]</scope>
    <scope>FUNCTION</scope>
    <scope>TRANSPORTER ACTIVITY</scope>
    <source>
        <strain>C57BL/6J</strain>
        <tissue>Liver</tissue>
    </source>
</reference>
<reference key="2">
    <citation type="journal article" date="2005" name="Science">
        <title>The transcriptional landscape of the mammalian genome.</title>
        <authorList>
            <person name="Carninci P."/>
            <person name="Kasukawa T."/>
            <person name="Katayama S."/>
            <person name="Gough J."/>
            <person name="Frith M.C."/>
            <person name="Maeda N."/>
            <person name="Oyama R."/>
            <person name="Ravasi T."/>
            <person name="Lenhard B."/>
            <person name="Wells C."/>
            <person name="Kodzius R."/>
            <person name="Shimokawa K."/>
            <person name="Bajic V.B."/>
            <person name="Brenner S.E."/>
            <person name="Batalov S."/>
            <person name="Forrest A.R."/>
            <person name="Zavolan M."/>
            <person name="Davis M.J."/>
            <person name="Wilming L.G."/>
            <person name="Aidinis V."/>
            <person name="Allen J.E."/>
            <person name="Ambesi-Impiombato A."/>
            <person name="Apweiler R."/>
            <person name="Aturaliya R.N."/>
            <person name="Bailey T.L."/>
            <person name="Bansal M."/>
            <person name="Baxter L."/>
            <person name="Beisel K.W."/>
            <person name="Bersano T."/>
            <person name="Bono H."/>
            <person name="Chalk A.M."/>
            <person name="Chiu K.P."/>
            <person name="Choudhary V."/>
            <person name="Christoffels A."/>
            <person name="Clutterbuck D.R."/>
            <person name="Crowe M.L."/>
            <person name="Dalla E."/>
            <person name="Dalrymple B.P."/>
            <person name="de Bono B."/>
            <person name="Della Gatta G."/>
            <person name="di Bernardo D."/>
            <person name="Down T."/>
            <person name="Engstrom P."/>
            <person name="Fagiolini M."/>
            <person name="Faulkner G."/>
            <person name="Fletcher C.F."/>
            <person name="Fukushima T."/>
            <person name="Furuno M."/>
            <person name="Futaki S."/>
            <person name="Gariboldi M."/>
            <person name="Georgii-Hemming P."/>
            <person name="Gingeras T.R."/>
            <person name="Gojobori T."/>
            <person name="Green R.E."/>
            <person name="Gustincich S."/>
            <person name="Harbers M."/>
            <person name="Hayashi Y."/>
            <person name="Hensch T.K."/>
            <person name="Hirokawa N."/>
            <person name="Hill D."/>
            <person name="Huminiecki L."/>
            <person name="Iacono M."/>
            <person name="Ikeo K."/>
            <person name="Iwama A."/>
            <person name="Ishikawa T."/>
            <person name="Jakt M."/>
            <person name="Kanapin A."/>
            <person name="Katoh M."/>
            <person name="Kawasawa Y."/>
            <person name="Kelso J."/>
            <person name="Kitamura H."/>
            <person name="Kitano H."/>
            <person name="Kollias G."/>
            <person name="Krishnan S.P."/>
            <person name="Kruger A."/>
            <person name="Kummerfeld S.K."/>
            <person name="Kurochkin I.V."/>
            <person name="Lareau L.F."/>
            <person name="Lazarevic D."/>
            <person name="Lipovich L."/>
            <person name="Liu J."/>
            <person name="Liuni S."/>
            <person name="McWilliam S."/>
            <person name="Madan Babu M."/>
            <person name="Madera M."/>
            <person name="Marchionni L."/>
            <person name="Matsuda H."/>
            <person name="Matsuzawa S."/>
            <person name="Miki H."/>
            <person name="Mignone F."/>
            <person name="Miyake S."/>
            <person name="Morris K."/>
            <person name="Mottagui-Tabar S."/>
            <person name="Mulder N."/>
            <person name="Nakano N."/>
            <person name="Nakauchi H."/>
            <person name="Ng P."/>
            <person name="Nilsson R."/>
            <person name="Nishiguchi S."/>
            <person name="Nishikawa S."/>
            <person name="Nori F."/>
            <person name="Ohara O."/>
            <person name="Okazaki Y."/>
            <person name="Orlando V."/>
            <person name="Pang K.C."/>
            <person name="Pavan W.J."/>
            <person name="Pavesi G."/>
            <person name="Pesole G."/>
            <person name="Petrovsky N."/>
            <person name="Piazza S."/>
            <person name="Reed J."/>
            <person name="Reid J.F."/>
            <person name="Ring B.Z."/>
            <person name="Ringwald M."/>
            <person name="Rost B."/>
            <person name="Ruan Y."/>
            <person name="Salzberg S.L."/>
            <person name="Sandelin A."/>
            <person name="Schneider C."/>
            <person name="Schoenbach C."/>
            <person name="Sekiguchi K."/>
            <person name="Semple C.A."/>
            <person name="Seno S."/>
            <person name="Sessa L."/>
            <person name="Sheng Y."/>
            <person name="Shibata Y."/>
            <person name="Shimada H."/>
            <person name="Shimada K."/>
            <person name="Silva D."/>
            <person name="Sinclair B."/>
            <person name="Sperling S."/>
            <person name="Stupka E."/>
            <person name="Sugiura K."/>
            <person name="Sultana R."/>
            <person name="Takenaka Y."/>
            <person name="Taki K."/>
            <person name="Tammoja K."/>
            <person name="Tan S.L."/>
            <person name="Tang S."/>
            <person name="Taylor M.S."/>
            <person name="Tegner J."/>
            <person name="Teichmann S.A."/>
            <person name="Ueda H.R."/>
            <person name="van Nimwegen E."/>
            <person name="Verardo R."/>
            <person name="Wei C.L."/>
            <person name="Yagi K."/>
            <person name="Yamanishi H."/>
            <person name="Zabarovsky E."/>
            <person name="Zhu S."/>
            <person name="Zimmer A."/>
            <person name="Hide W."/>
            <person name="Bult C."/>
            <person name="Grimmond S.M."/>
            <person name="Teasdale R.D."/>
            <person name="Liu E.T."/>
            <person name="Brusic V."/>
            <person name="Quackenbush J."/>
            <person name="Wahlestedt C."/>
            <person name="Mattick J.S."/>
            <person name="Hume D.A."/>
            <person name="Kai C."/>
            <person name="Sasaki D."/>
            <person name="Tomaru Y."/>
            <person name="Fukuda S."/>
            <person name="Kanamori-Katayama M."/>
            <person name="Suzuki M."/>
            <person name="Aoki J."/>
            <person name="Arakawa T."/>
            <person name="Iida J."/>
            <person name="Imamura K."/>
            <person name="Itoh M."/>
            <person name="Kato T."/>
            <person name="Kawaji H."/>
            <person name="Kawagashira N."/>
            <person name="Kawashima T."/>
            <person name="Kojima M."/>
            <person name="Kondo S."/>
            <person name="Konno H."/>
            <person name="Nakano K."/>
            <person name="Ninomiya N."/>
            <person name="Nishio T."/>
            <person name="Okada M."/>
            <person name="Plessy C."/>
            <person name="Shibata K."/>
            <person name="Shiraki T."/>
            <person name="Suzuki S."/>
            <person name="Tagami M."/>
            <person name="Waki K."/>
            <person name="Watahiki A."/>
            <person name="Okamura-Oho Y."/>
            <person name="Suzuki H."/>
            <person name="Kawai J."/>
            <person name="Hayashizaki Y."/>
        </authorList>
    </citation>
    <scope>NUCLEOTIDE SEQUENCE [LARGE SCALE MRNA]</scope>
    <source>
        <strain>C57BL/6J</strain>
        <tissue>Mammary gland</tissue>
    </source>
</reference>
<reference key="3">
    <citation type="journal article" date="2004" name="Genome Res.">
        <title>The status, quality, and expansion of the NIH full-length cDNA project: the Mammalian Gene Collection (MGC).</title>
        <authorList>
            <consortium name="The MGC Project Team"/>
        </authorList>
    </citation>
    <scope>NUCLEOTIDE SEQUENCE [LARGE SCALE MRNA]</scope>
    <source>
        <strain>FVB/N</strain>
        <tissue>Mammary tumor</tissue>
    </source>
</reference>
<comment type="function">
    <text evidence="1 4">Sodium-dependent, pyrimidine- and purine-selective (PubMed:11032837). Involved in the homeostasis of endogenous nucleosides (PubMed:11032837). Exhibits the transport characteristics of the nucleoside transport system cib or N3 subtype (N3/cib) (with marked transport of both thymidine and inosine) (PubMed:11032837). Employs a 2:1 sodium/nucleoside ratio (PubMed:11032837). Also able to transport gemcitabine, 3'-azido-3'-deoxythymidine (AZT), ribavirin and 3-deazauridine (By similarity).</text>
</comment>
<comment type="catalytic activity">
    <reaction evidence="4">
        <text>thymidine(out) + 2 Na(+)(out) = thymidine(in) + 2 Na(+)(in)</text>
        <dbReference type="Rhea" id="RHEA:69899"/>
        <dbReference type="ChEBI" id="CHEBI:17748"/>
        <dbReference type="ChEBI" id="CHEBI:29101"/>
    </reaction>
</comment>
<comment type="catalytic activity">
    <reaction evidence="4">
        <text>cytidine(out) + 2 Na(+)(out) = cytidine(in) + 2 Na(+)(in)</text>
        <dbReference type="Rhea" id="RHEA:69903"/>
        <dbReference type="ChEBI" id="CHEBI:17562"/>
        <dbReference type="ChEBI" id="CHEBI:29101"/>
    </reaction>
</comment>
<comment type="catalytic activity">
    <reaction evidence="4">
        <text>uridine(out) + 2 Na(+)(out) = uridine(in) + 2 Na(+)(in)</text>
        <dbReference type="Rhea" id="RHEA:69907"/>
        <dbReference type="ChEBI" id="CHEBI:16704"/>
        <dbReference type="ChEBI" id="CHEBI:29101"/>
    </reaction>
</comment>
<comment type="catalytic activity">
    <reaction evidence="4">
        <text>adenosine(out) + 2 Na(+)(out) = adenosine(in) + 2 Na(+)(in)</text>
        <dbReference type="Rhea" id="RHEA:69911"/>
        <dbReference type="ChEBI" id="CHEBI:16335"/>
        <dbReference type="ChEBI" id="CHEBI:29101"/>
    </reaction>
</comment>
<comment type="catalytic activity">
    <reaction evidence="4">
        <text>guanosine(out) + 2 Na(+)(out) = guanosine(in) + 2 Na(+)(in)</text>
        <dbReference type="Rhea" id="RHEA:69915"/>
        <dbReference type="ChEBI" id="CHEBI:16750"/>
        <dbReference type="ChEBI" id="CHEBI:29101"/>
    </reaction>
</comment>
<comment type="catalytic activity">
    <reaction evidence="4">
        <text>inosine(out) + 2 Na(+)(out) = inosine(in) + 2 Na(+)(in)</text>
        <dbReference type="Rhea" id="RHEA:69919"/>
        <dbReference type="ChEBI" id="CHEBI:17596"/>
        <dbReference type="ChEBI" id="CHEBI:29101"/>
    </reaction>
</comment>
<comment type="subunit">
    <text evidence="1">Homotrimer.</text>
</comment>
<comment type="subcellular location">
    <subcellularLocation>
        <location evidence="1">Cell membrane</location>
        <topology evidence="2">Multi-pass membrane protein</topology>
    </subcellularLocation>
</comment>
<comment type="similarity">
    <text evidence="6">Belongs to the concentrative nucleoside transporter (CNT) (TC 2.A.41) family.</text>
</comment>
<dbReference type="EMBL" id="AF305211">
    <property type="protein sequence ID" value="AAG22552.1"/>
    <property type="molecule type" value="mRNA"/>
</dbReference>
<dbReference type="EMBL" id="AK052784">
    <property type="protein sequence ID" value="BAC35145.1"/>
    <property type="molecule type" value="mRNA"/>
</dbReference>
<dbReference type="EMBL" id="AK145077">
    <property type="protein sequence ID" value="BAE26226.1"/>
    <property type="molecule type" value="mRNA"/>
</dbReference>
<dbReference type="EMBL" id="BC010472">
    <property type="protein sequence ID" value="AAH10472.1"/>
    <property type="molecule type" value="mRNA"/>
</dbReference>
<dbReference type="EMBL" id="BC013783">
    <property type="protein sequence ID" value="AAH13783.1"/>
    <property type="molecule type" value="mRNA"/>
</dbReference>
<dbReference type="CCDS" id="CCDS26572.1"/>
<dbReference type="RefSeq" id="NP_071712.3">
    <property type="nucleotide sequence ID" value="NM_022317.3"/>
</dbReference>
<dbReference type="SMR" id="Q9ERH8"/>
<dbReference type="FunCoup" id="Q9ERH8">
    <property type="interactions" value="23"/>
</dbReference>
<dbReference type="STRING" id="10090.ENSMUSP00000022036"/>
<dbReference type="TCDB" id="2.A.41.2.6">
    <property type="family name" value="the concentrative nucleoside transporter (cnt) family"/>
</dbReference>
<dbReference type="PhosphoSitePlus" id="Q9ERH8"/>
<dbReference type="PaxDb" id="10090-ENSMUSP00000022036"/>
<dbReference type="ProteomicsDB" id="256875"/>
<dbReference type="Antibodypedia" id="13126">
    <property type="antibodies" value="69 antibodies from 15 providers"/>
</dbReference>
<dbReference type="DNASU" id="114304"/>
<dbReference type="Ensembl" id="ENSMUST00000022036.14">
    <property type="protein sequence ID" value="ENSMUSP00000022036.8"/>
    <property type="gene ID" value="ENSMUSG00000021553.15"/>
</dbReference>
<dbReference type="GeneID" id="114304"/>
<dbReference type="KEGG" id="mmu:114304"/>
<dbReference type="UCSC" id="uc007qud.1">
    <property type="organism name" value="mouse"/>
</dbReference>
<dbReference type="AGR" id="MGI:2137361"/>
<dbReference type="CTD" id="64078"/>
<dbReference type="MGI" id="MGI:2137361">
    <property type="gene designation" value="Slc28a3"/>
</dbReference>
<dbReference type="VEuPathDB" id="HostDB:ENSMUSG00000021553"/>
<dbReference type="eggNOG" id="KOG3747">
    <property type="taxonomic scope" value="Eukaryota"/>
</dbReference>
<dbReference type="GeneTree" id="ENSGT00390000016025"/>
<dbReference type="HOGENOM" id="CLU_016813_3_0_1"/>
<dbReference type="InParanoid" id="Q9ERH8"/>
<dbReference type="OMA" id="ERKYDTV"/>
<dbReference type="OrthoDB" id="6075923at2759"/>
<dbReference type="PhylomeDB" id="Q9ERH8"/>
<dbReference type="TreeFam" id="TF314131"/>
<dbReference type="Reactome" id="R-MMU-83936">
    <property type="pathway name" value="Transport of nucleosides and free purine and pyrimidine bases across the plasma membrane"/>
</dbReference>
<dbReference type="Reactome" id="R-MMU-9748787">
    <property type="pathway name" value="Azathioprine ADME"/>
</dbReference>
<dbReference type="Reactome" id="R-MMU-9755088">
    <property type="pathway name" value="Ribavirin ADME"/>
</dbReference>
<dbReference type="SABIO-RK" id="Q9ERH8"/>
<dbReference type="BioGRID-ORCS" id="114304">
    <property type="hits" value="4 hits in 79 CRISPR screens"/>
</dbReference>
<dbReference type="ChiTaRS" id="Slc28a3">
    <property type="organism name" value="mouse"/>
</dbReference>
<dbReference type="PRO" id="PR:Q9ERH8"/>
<dbReference type="Proteomes" id="UP000000589">
    <property type="component" value="Chromosome 13"/>
</dbReference>
<dbReference type="RNAct" id="Q9ERH8">
    <property type="molecule type" value="protein"/>
</dbReference>
<dbReference type="Bgee" id="ENSMUSG00000021553">
    <property type="expression patterns" value="Expressed in conjunctival fornix and 56 other cell types or tissues"/>
</dbReference>
<dbReference type="ExpressionAtlas" id="Q9ERH8">
    <property type="expression patterns" value="baseline and differential"/>
</dbReference>
<dbReference type="GO" id="GO:0031526">
    <property type="term" value="C:brush border membrane"/>
    <property type="evidence" value="ECO:0000314"/>
    <property type="project" value="ARUK-UCL"/>
</dbReference>
<dbReference type="GO" id="GO:0005886">
    <property type="term" value="C:plasma membrane"/>
    <property type="evidence" value="ECO:0000250"/>
    <property type="project" value="MGI"/>
</dbReference>
<dbReference type="GO" id="GO:0015390">
    <property type="term" value="F:purine-specific nucleoside:sodium symporter activity"/>
    <property type="evidence" value="ECO:0000314"/>
    <property type="project" value="MGI"/>
</dbReference>
<dbReference type="GO" id="GO:0015389">
    <property type="term" value="F:pyrimidine- and adenosine-specific:sodium symporter activity"/>
    <property type="evidence" value="ECO:0000314"/>
    <property type="project" value="MGI"/>
</dbReference>
<dbReference type="GO" id="GO:0015213">
    <property type="term" value="F:uridine transmembrane transporter activity"/>
    <property type="evidence" value="ECO:0007669"/>
    <property type="project" value="Ensembl"/>
</dbReference>
<dbReference type="GO" id="GO:0015860">
    <property type="term" value="P:purine nucleoside transmembrane transport"/>
    <property type="evidence" value="ECO:0000314"/>
    <property type="project" value="MGI"/>
</dbReference>
<dbReference type="GO" id="GO:0015864">
    <property type="term" value="P:pyrimidine nucleoside transport"/>
    <property type="evidence" value="ECO:0000314"/>
    <property type="project" value="MGI"/>
</dbReference>
<dbReference type="InterPro" id="IPR008276">
    <property type="entry name" value="C_nuclsd_transpt"/>
</dbReference>
<dbReference type="InterPro" id="IPR018270">
    <property type="entry name" value="C_nuclsd_transpt_met_bac"/>
</dbReference>
<dbReference type="InterPro" id="IPR011657">
    <property type="entry name" value="CNT_C_dom"/>
</dbReference>
<dbReference type="InterPro" id="IPR002668">
    <property type="entry name" value="CNT_N_dom"/>
</dbReference>
<dbReference type="InterPro" id="IPR011642">
    <property type="entry name" value="Gate_dom"/>
</dbReference>
<dbReference type="NCBIfam" id="TIGR00804">
    <property type="entry name" value="nupC"/>
    <property type="match status" value="1"/>
</dbReference>
<dbReference type="PANTHER" id="PTHR10590">
    <property type="entry name" value="SODIUM/NUCLEOSIDE COTRANSPORTER"/>
    <property type="match status" value="1"/>
</dbReference>
<dbReference type="PANTHER" id="PTHR10590:SF4">
    <property type="entry name" value="SOLUTE CARRIER FAMILY 28 MEMBER 3"/>
    <property type="match status" value="1"/>
</dbReference>
<dbReference type="Pfam" id="PF07670">
    <property type="entry name" value="Gate"/>
    <property type="match status" value="1"/>
</dbReference>
<dbReference type="Pfam" id="PF07662">
    <property type="entry name" value="Nucleos_tra2_C"/>
    <property type="match status" value="1"/>
</dbReference>
<dbReference type="Pfam" id="PF01773">
    <property type="entry name" value="Nucleos_tra2_N"/>
    <property type="match status" value="1"/>
</dbReference>
<organism>
    <name type="scientific">Mus musculus</name>
    <name type="common">Mouse</name>
    <dbReference type="NCBI Taxonomy" id="10090"/>
    <lineage>
        <taxon>Eukaryota</taxon>
        <taxon>Metazoa</taxon>
        <taxon>Chordata</taxon>
        <taxon>Craniata</taxon>
        <taxon>Vertebrata</taxon>
        <taxon>Euteleostomi</taxon>
        <taxon>Mammalia</taxon>
        <taxon>Eutheria</taxon>
        <taxon>Euarchontoglires</taxon>
        <taxon>Glires</taxon>
        <taxon>Rodentia</taxon>
        <taxon>Myomorpha</taxon>
        <taxon>Muroidea</taxon>
        <taxon>Muridae</taxon>
        <taxon>Murinae</taxon>
        <taxon>Mus</taxon>
        <taxon>Mus</taxon>
    </lineage>
</organism>
<evidence type="ECO:0000250" key="1">
    <source>
        <dbReference type="UniProtKB" id="Q9HAS3"/>
    </source>
</evidence>
<evidence type="ECO:0000255" key="2"/>
<evidence type="ECO:0000256" key="3">
    <source>
        <dbReference type="SAM" id="MobiDB-lite"/>
    </source>
</evidence>
<evidence type="ECO:0000269" key="4">
    <source>
    </source>
</evidence>
<evidence type="ECO:0000303" key="5">
    <source>
    </source>
</evidence>
<evidence type="ECO:0000305" key="6"/>
<protein>
    <recommendedName>
        <fullName>Solute carrier family 28 member 3</fullName>
    </recommendedName>
    <alternativeName>
        <fullName evidence="5">Concentrative Na(+)-nucleoside cotransporter 3</fullName>
        <shortName evidence="5">CNT 3</shortName>
        <shortName evidence="5">mCNT3</shortName>
    </alternativeName>
</protein>
<sequence>MSRADPGKNSEPSESKMSLELRPTAPSDLGRSNEAFQDEDLERQNTPGNSTVRNRVVQSGEQGHAKQDDRQITIEQEPLGNKEDPEDDSEDEHQKGFLERKYDTICEFCRKHRVVLRSTIWAVLLTGFLALVIAACAINFHRALPLFVITLVTIFFVIWDHLMAKYEQRIDDFLSPGRRLLDRHWFWLKWVVWSSLILAIILWLSLDTAKLGQQNLVSFGGLIMYLILLFLFSKHPTRVYWRPVFWGIGLQFLLGLLILRTRPGFVAFDWMGRQVQTFLGYTDTGARFVFGEKYTDHFFAFKILPIVVFFSTVMSMLYYLGLMQWIIRKVGWLMLVTMGSSPIESVVAAGNIFIGQTESPLLVQPYLPHVTKSELHTIMTAGFATIAGSVLGAYISFGVSSTHLLTASVMSAPAALAVAKLFWPETEKPKITLKSAMKMENGDSRNLLEAASQGASSSIPLVANIAANLIAFLALLSFVNSALSWFGSMFNYPELSFELICSYIFMPFSFMMGVDWQDSFMVAKLIGYKTFFNEFVAYDHLSKLINLRKAAGPKFVNGVQQYMSIRSETIATYALCGFANFGSLGIVIGGLTSIAPSRKRDIASGAMRALIAGTIACFMTACIAGILSDTPVDINCHHVLENGRVLSNTTEVVSCCQNLFNSTVAKGPNDVVPGGNFSLYALKSCCNLLKPPTLNCNWIPNKL</sequence>
<keyword id="KW-1003">Cell membrane</keyword>
<keyword id="KW-0472">Membrane</keyword>
<keyword id="KW-1185">Reference proteome</keyword>
<keyword id="KW-0769">Symport</keyword>
<keyword id="KW-0812">Transmembrane</keyword>
<keyword id="KW-1133">Transmembrane helix</keyword>
<keyword id="KW-0813">Transport</keyword>
<feature type="chain" id="PRO_0000324147" description="Solute carrier family 28 member 3">
    <location>
        <begin position="1"/>
        <end position="703"/>
    </location>
</feature>
<feature type="topological domain" description="Cytoplasmic" evidence="6">
    <location>
        <begin position="1"/>
        <end position="117"/>
    </location>
</feature>
<feature type="transmembrane region" description="Helical; Name=TM1" evidence="1">
    <location>
        <begin position="118"/>
        <end position="138"/>
    </location>
</feature>
<feature type="topological domain" description="Extracellular" evidence="6">
    <location>
        <begin position="139"/>
        <end position="143"/>
    </location>
</feature>
<feature type="transmembrane region" description="Helical; Name=TM2" evidence="1">
    <location>
        <begin position="144"/>
        <end position="164"/>
    </location>
</feature>
<feature type="topological domain" description="Cytoplasmic" evidence="6">
    <location>
        <begin position="165"/>
        <end position="188"/>
    </location>
</feature>
<feature type="transmembrane region" description="Helical; Name=TM3" evidence="1">
    <location>
        <begin position="189"/>
        <end position="209"/>
    </location>
</feature>
<feature type="topological domain" description="Extracellular" evidence="6">
    <location>
        <begin position="210"/>
        <end position="212"/>
    </location>
</feature>
<feature type="transmembrane region" description="Helical; Name=TM4" evidence="1">
    <location>
        <begin position="213"/>
        <end position="234"/>
    </location>
</feature>
<feature type="topological domain" description="Cytoplasmic" evidence="6">
    <location>
        <begin position="235"/>
        <end position="242"/>
    </location>
</feature>
<feature type="transmembrane region" description="Helical; Name=TM5" evidence="1">
    <location>
        <begin position="243"/>
        <end position="262"/>
    </location>
</feature>
<feature type="topological domain" description="Extracellular" evidence="6">
    <location>
        <begin position="263"/>
        <end position="299"/>
    </location>
</feature>
<feature type="transmembrane region" description="Helical; Name=TM6" evidence="1">
    <location>
        <begin position="300"/>
        <end position="320"/>
    </location>
</feature>
<feature type="topological domain" description="Cytoplasmic" evidence="6">
    <location>
        <begin position="321"/>
        <end position="344"/>
    </location>
</feature>
<feature type="intramembrane region" description="Helical; Name=HP1" evidence="1">
    <location>
        <begin position="345"/>
        <end position="363"/>
    </location>
</feature>
<feature type="topological domain" description="Cytoplasmic" evidence="6">
    <location>
        <begin position="364"/>
        <end position="376"/>
    </location>
</feature>
<feature type="transmembrane region" description="Helical; Name=TM7" evidence="1">
    <location>
        <begin position="377"/>
        <end position="399"/>
    </location>
</feature>
<feature type="topological domain" description="Extracellular" evidence="6">
    <location>
        <begin position="400"/>
        <end position="401"/>
    </location>
</feature>
<feature type="transmembrane region" description="Helical; Name=TM8" evidence="1">
    <location>
        <begin position="402"/>
        <end position="423"/>
    </location>
</feature>
<feature type="topological domain" description="Cytoplasmic" evidence="6">
    <location>
        <begin position="424"/>
        <end position="458"/>
    </location>
</feature>
<feature type="transmembrane region" description="Helical; Name=TM9" evidence="1">
    <location>
        <begin position="459"/>
        <end position="484"/>
    </location>
</feature>
<feature type="topological domain" description="Extracellular" evidence="6">
    <location>
        <begin position="485"/>
        <end position="522"/>
    </location>
</feature>
<feature type="intramembrane region" description="Helical; Name=HP2" evidence="1">
    <location>
        <begin position="523"/>
        <end position="542"/>
    </location>
</feature>
<feature type="topological domain" description="Extracellular" evidence="6">
    <location>
        <begin position="543"/>
        <end position="581"/>
    </location>
</feature>
<feature type="transmembrane region" description="Helical; Name=TM10" evidence="1">
    <location>
        <begin position="582"/>
        <end position="592"/>
    </location>
</feature>
<feature type="topological domain" description="Cytoplasmic" evidence="6">
    <location>
        <begin position="593"/>
        <end position="605"/>
    </location>
</feature>
<feature type="transmembrane region" description="Helical; Name=TM11" evidence="1">
    <location>
        <begin position="606"/>
        <end position="628"/>
    </location>
</feature>
<feature type="topological domain" description="Extracellular" evidence="6">
    <location>
        <begin position="629"/>
        <end position="703"/>
    </location>
</feature>
<feature type="region of interest" description="Disordered" evidence="3">
    <location>
        <begin position="1"/>
        <end position="93"/>
    </location>
</feature>
<feature type="compositionally biased region" description="Basic and acidic residues" evidence="3">
    <location>
        <begin position="1"/>
        <end position="19"/>
    </location>
</feature>
<feature type="compositionally biased region" description="Polar residues" evidence="3">
    <location>
        <begin position="44"/>
        <end position="61"/>
    </location>
</feature>
<feature type="compositionally biased region" description="Basic and acidic residues" evidence="3">
    <location>
        <begin position="63"/>
        <end position="72"/>
    </location>
</feature>
<feature type="sequence conflict" description="In Ref. 2; BAE26226." evidence="6" ref="2">
    <original>D</original>
    <variation>N</variation>
    <location>
        <position position="69"/>
    </location>
</feature>
<feature type="sequence conflict" description="In Ref. 3; AAH10472/AAH13783." evidence="6" ref="3">
    <original>N</original>
    <variation>S</variation>
    <location>
        <position position="139"/>
    </location>
</feature>
<feature type="sequence conflict" description="In Ref. 2; BAE26226." evidence="6" ref="2">
    <original>D</original>
    <variation>N</variation>
    <location>
        <position position="171"/>
    </location>
</feature>
<feature type="sequence conflict" description="In Ref. 2; BAC35145." evidence="6" ref="2">
    <original>H</original>
    <variation>P</variation>
    <location>
        <position position="540"/>
    </location>
</feature>
<feature type="sequence conflict" description="In Ref. 3; AAH10472/AAH13783." evidence="6" ref="3">
    <original>K</original>
    <variation>R</variation>
    <location>
        <position position="666"/>
    </location>
</feature>
<feature type="sequence conflict" description="In Ref. 2; BAE26226 and 3; AAH10472/AAH13783." evidence="6" ref="2 3">
    <original>N</original>
    <variation>D</variation>
    <location>
        <position position="697"/>
    </location>
</feature>
<gene>
    <name type="primary">Slc28a3</name>
    <name evidence="5" type="synonym">Cnt3</name>
</gene>
<name>S28A3_MOUSE</name>